<sequence>MNKENKQELVAEMHDKLQRAQAVFLADFRGMNVGQATELRNELRKANAEYKVVKNTLLEIASKGTDKEGLNPYYAGPTAIALCYDDPVAAAKVLSRFNKENTNPFTLKAGVLTGKTINVADIQALADLPSREVLIAKMLGSMQAPASNFVRVLAAVPGGFVRALDAIRAQKEA</sequence>
<dbReference type="EMBL" id="CP001661">
    <property type="protein sequence ID" value="ACT19362.1"/>
    <property type="molecule type" value="Genomic_DNA"/>
</dbReference>
<dbReference type="SMR" id="C6E4R6"/>
<dbReference type="STRING" id="443144.GM21_3337"/>
<dbReference type="KEGG" id="gem:GM21_3337"/>
<dbReference type="eggNOG" id="COG0244">
    <property type="taxonomic scope" value="Bacteria"/>
</dbReference>
<dbReference type="HOGENOM" id="CLU_092227_0_0_7"/>
<dbReference type="OrthoDB" id="3186107at2"/>
<dbReference type="GO" id="GO:0015934">
    <property type="term" value="C:large ribosomal subunit"/>
    <property type="evidence" value="ECO:0007669"/>
    <property type="project" value="InterPro"/>
</dbReference>
<dbReference type="GO" id="GO:0070180">
    <property type="term" value="F:large ribosomal subunit rRNA binding"/>
    <property type="evidence" value="ECO:0007669"/>
    <property type="project" value="UniProtKB-UniRule"/>
</dbReference>
<dbReference type="GO" id="GO:0003735">
    <property type="term" value="F:structural constituent of ribosome"/>
    <property type="evidence" value="ECO:0007669"/>
    <property type="project" value="InterPro"/>
</dbReference>
<dbReference type="GO" id="GO:0006412">
    <property type="term" value="P:translation"/>
    <property type="evidence" value="ECO:0007669"/>
    <property type="project" value="UniProtKB-UniRule"/>
</dbReference>
<dbReference type="CDD" id="cd05797">
    <property type="entry name" value="Ribosomal_L10"/>
    <property type="match status" value="1"/>
</dbReference>
<dbReference type="Gene3D" id="3.30.70.1730">
    <property type="match status" value="1"/>
</dbReference>
<dbReference type="Gene3D" id="6.10.250.290">
    <property type="match status" value="1"/>
</dbReference>
<dbReference type="HAMAP" id="MF_00362">
    <property type="entry name" value="Ribosomal_uL10"/>
    <property type="match status" value="1"/>
</dbReference>
<dbReference type="InterPro" id="IPR001790">
    <property type="entry name" value="Ribosomal_uL10"/>
</dbReference>
<dbReference type="InterPro" id="IPR043141">
    <property type="entry name" value="Ribosomal_uL10-like_sf"/>
</dbReference>
<dbReference type="InterPro" id="IPR022973">
    <property type="entry name" value="Ribosomal_uL10_bac"/>
</dbReference>
<dbReference type="InterPro" id="IPR047865">
    <property type="entry name" value="Ribosomal_uL10_bac_type"/>
</dbReference>
<dbReference type="InterPro" id="IPR002363">
    <property type="entry name" value="Ribosomal_uL10_CS_bac"/>
</dbReference>
<dbReference type="NCBIfam" id="NF000955">
    <property type="entry name" value="PRK00099.1-1"/>
    <property type="match status" value="1"/>
</dbReference>
<dbReference type="PANTHER" id="PTHR11560">
    <property type="entry name" value="39S RIBOSOMAL PROTEIN L10, MITOCHONDRIAL"/>
    <property type="match status" value="1"/>
</dbReference>
<dbReference type="Pfam" id="PF00466">
    <property type="entry name" value="Ribosomal_L10"/>
    <property type="match status" value="1"/>
</dbReference>
<dbReference type="SUPFAM" id="SSF160369">
    <property type="entry name" value="Ribosomal protein L10-like"/>
    <property type="match status" value="1"/>
</dbReference>
<dbReference type="PROSITE" id="PS01109">
    <property type="entry name" value="RIBOSOMAL_L10"/>
    <property type="match status" value="1"/>
</dbReference>
<protein>
    <recommendedName>
        <fullName evidence="1">Large ribosomal subunit protein uL10</fullName>
    </recommendedName>
    <alternativeName>
        <fullName evidence="2">50S ribosomal protein L10</fullName>
    </alternativeName>
</protein>
<feature type="chain" id="PRO_1000205442" description="Large ribosomal subunit protein uL10">
    <location>
        <begin position="1"/>
        <end position="173"/>
    </location>
</feature>
<proteinExistence type="inferred from homology"/>
<organism>
    <name type="scientific">Geobacter sp. (strain M21)</name>
    <dbReference type="NCBI Taxonomy" id="443144"/>
    <lineage>
        <taxon>Bacteria</taxon>
        <taxon>Pseudomonadati</taxon>
        <taxon>Thermodesulfobacteriota</taxon>
        <taxon>Desulfuromonadia</taxon>
        <taxon>Geobacterales</taxon>
        <taxon>Geobacteraceae</taxon>
        <taxon>Geobacter</taxon>
    </lineage>
</organism>
<reference key="1">
    <citation type="submission" date="2009-07" db="EMBL/GenBank/DDBJ databases">
        <title>Complete sequence of Geobacter sp. M21.</title>
        <authorList>
            <consortium name="US DOE Joint Genome Institute"/>
            <person name="Lucas S."/>
            <person name="Copeland A."/>
            <person name="Lapidus A."/>
            <person name="Glavina del Rio T."/>
            <person name="Dalin E."/>
            <person name="Tice H."/>
            <person name="Bruce D."/>
            <person name="Goodwin L."/>
            <person name="Pitluck S."/>
            <person name="Saunders E."/>
            <person name="Brettin T."/>
            <person name="Detter J.C."/>
            <person name="Han C."/>
            <person name="Larimer F."/>
            <person name="Land M."/>
            <person name="Hauser L."/>
            <person name="Kyrpides N."/>
            <person name="Ovchinnikova G."/>
            <person name="Lovley D."/>
        </authorList>
    </citation>
    <scope>NUCLEOTIDE SEQUENCE [LARGE SCALE GENOMIC DNA]</scope>
    <source>
        <strain>M21</strain>
    </source>
</reference>
<gene>
    <name evidence="1" type="primary">rplJ</name>
    <name type="ordered locus">GM21_3337</name>
</gene>
<evidence type="ECO:0000255" key="1">
    <source>
        <dbReference type="HAMAP-Rule" id="MF_00362"/>
    </source>
</evidence>
<evidence type="ECO:0000305" key="2"/>
<name>RL10_GEOSM</name>
<accession>C6E4R6</accession>
<comment type="function">
    <text evidence="1">Forms part of the ribosomal stalk, playing a central role in the interaction of the ribosome with GTP-bound translation factors.</text>
</comment>
<comment type="subunit">
    <text evidence="1">Part of the ribosomal stalk of the 50S ribosomal subunit. The N-terminus interacts with L11 and the large rRNA to form the base of the stalk. The C-terminus forms an elongated spine to which L12 dimers bind in a sequential fashion forming a multimeric L10(L12)X complex.</text>
</comment>
<comment type="similarity">
    <text evidence="1">Belongs to the universal ribosomal protein uL10 family.</text>
</comment>
<keyword id="KW-0687">Ribonucleoprotein</keyword>
<keyword id="KW-0689">Ribosomal protein</keyword>
<keyword id="KW-0694">RNA-binding</keyword>
<keyword id="KW-0699">rRNA-binding</keyword>